<name>OSGP2_CAEEL</name>
<proteinExistence type="evidence at protein level"/>
<accession>Q93170</accession>
<dbReference type="EC" id="2.3.1.234" evidence="1"/>
<dbReference type="EMBL" id="Z81030">
    <property type="protein sequence ID" value="CAB02716.1"/>
    <property type="molecule type" value="Genomic_DNA"/>
</dbReference>
<dbReference type="PIR" id="T18825">
    <property type="entry name" value="T18825"/>
</dbReference>
<dbReference type="RefSeq" id="NP_506713.1">
    <property type="nucleotide sequence ID" value="NM_074312.4"/>
</dbReference>
<dbReference type="SMR" id="Q93170"/>
<dbReference type="BioGRID" id="45010">
    <property type="interactions" value="6"/>
</dbReference>
<dbReference type="FunCoup" id="Q93170">
    <property type="interactions" value="3101"/>
</dbReference>
<dbReference type="STRING" id="6239.C01G10.10a.1"/>
<dbReference type="PaxDb" id="6239-C01G10.10a"/>
<dbReference type="PeptideAtlas" id="Q93170"/>
<dbReference type="EnsemblMetazoa" id="C01G10.10a.1">
    <property type="protein sequence ID" value="C01G10.10a.1"/>
    <property type="gene ID" value="WBGene00007237"/>
</dbReference>
<dbReference type="GeneID" id="180015"/>
<dbReference type="KEGG" id="cel:CELE_C01G10.10"/>
<dbReference type="UCSC" id="C01G10.10">
    <property type="organism name" value="c. elegans"/>
</dbReference>
<dbReference type="AGR" id="WB:WBGene00007237"/>
<dbReference type="CTD" id="180015"/>
<dbReference type="WormBase" id="C01G10.10a">
    <property type="protein sequence ID" value="CE20480"/>
    <property type="gene ID" value="WBGene00007237"/>
</dbReference>
<dbReference type="eggNOG" id="KOG2707">
    <property type="taxonomic scope" value="Eukaryota"/>
</dbReference>
<dbReference type="GeneTree" id="ENSGT00940000153744"/>
<dbReference type="HOGENOM" id="CLU_023208_1_2_1"/>
<dbReference type="InParanoid" id="Q93170"/>
<dbReference type="OMA" id="NAAMIGC"/>
<dbReference type="OrthoDB" id="10259622at2759"/>
<dbReference type="PhylomeDB" id="Q93170"/>
<dbReference type="PRO" id="PR:Q93170"/>
<dbReference type="Proteomes" id="UP000001940">
    <property type="component" value="Chromosome V"/>
</dbReference>
<dbReference type="Bgee" id="WBGene00007237">
    <property type="expression patterns" value="Expressed in germ line (C elegans) and 4 other cell types or tissues"/>
</dbReference>
<dbReference type="GO" id="GO:0005739">
    <property type="term" value="C:mitochondrion"/>
    <property type="evidence" value="ECO:0000318"/>
    <property type="project" value="GO_Central"/>
</dbReference>
<dbReference type="GO" id="GO:0046872">
    <property type="term" value="F:metal ion binding"/>
    <property type="evidence" value="ECO:0007669"/>
    <property type="project" value="UniProtKB-KW"/>
</dbReference>
<dbReference type="GO" id="GO:0061711">
    <property type="term" value="F:N(6)-L-threonylcarbamoyladenine synthase activity"/>
    <property type="evidence" value="ECO:0007669"/>
    <property type="project" value="UniProtKB-EC"/>
</dbReference>
<dbReference type="GO" id="GO:0002949">
    <property type="term" value="P:tRNA threonylcarbamoyladenosine modification"/>
    <property type="evidence" value="ECO:0007669"/>
    <property type="project" value="UniProtKB-UniRule"/>
</dbReference>
<dbReference type="CDD" id="cd24134">
    <property type="entry name" value="ASKHA_NBD_OSGEPL1_QRI7_euk"/>
    <property type="match status" value="1"/>
</dbReference>
<dbReference type="FunFam" id="3.30.420.40:FF:000307">
    <property type="entry name" value="Probable tRNA N6-adenosine threonylcarbamoyltransferase, mitochondrial"/>
    <property type="match status" value="1"/>
</dbReference>
<dbReference type="Gene3D" id="3.30.420.40">
    <property type="match status" value="2"/>
</dbReference>
<dbReference type="HAMAP" id="MF_01445">
    <property type="entry name" value="TsaD"/>
    <property type="match status" value="1"/>
</dbReference>
<dbReference type="InterPro" id="IPR043129">
    <property type="entry name" value="ATPase_NBD"/>
</dbReference>
<dbReference type="InterPro" id="IPR000905">
    <property type="entry name" value="Gcp-like_dom"/>
</dbReference>
<dbReference type="InterPro" id="IPR017861">
    <property type="entry name" value="KAE1/TsaD"/>
</dbReference>
<dbReference type="InterPro" id="IPR022450">
    <property type="entry name" value="TsaD"/>
</dbReference>
<dbReference type="NCBIfam" id="TIGR00329">
    <property type="entry name" value="gcp_kae1"/>
    <property type="match status" value="1"/>
</dbReference>
<dbReference type="PANTHER" id="PTHR11735">
    <property type="entry name" value="TRNA N6-ADENOSINE THREONYLCARBAMOYLTRANSFERASE"/>
    <property type="match status" value="1"/>
</dbReference>
<dbReference type="PANTHER" id="PTHR11735:SF6">
    <property type="entry name" value="TRNA N6-ADENOSINE THREONYLCARBAMOYLTRANSFERASE, MITOCHONDRIAL"/>
    <property type="match status" value="1"/>
</dbReference>
<dbReference type="Pfam" id="PF00814">
    <property type="entry name" value="TsaD"/>
    <property type="match status" value="1"/>
</dbReference>
<dbReference type="PRINTS" id="PR00789">
    <property type="entry name" value="OSIALOPTASE"/>
</dbReference>
<dbReference type="SUPFAM" id="SSF53067">
    <property type="entry name" value="Actin-like ATPase domain"/>
    <property type="match status" value="1"/>
</dbReference>
<sequence length="421" mass="46276">MNIPKILNNNLVLKRIFCRNYSVKVLGIETSCDDTAVAIVNEKREILSSERYTERAIQRQQGGINPSVCALQHRENLPRLIEKCLNDAGTSPKDLDAVAVTVTPGLVIALKEGISAAIGFAKKHRLPLIPVHHMRAHALSILLVDDSVRFPFSAVLLSGGHALISVAEDVEKFKLYGQSVSGSPGECIDKVARQLGDLGSEFDGIHVGAAVEILASRASADGHLRYPIFLPNVPKANMNFDQIKGSYLNLLERLRKNSETSIDIPDFCASLQNTVARHISSKLHIFFESLSEQEKLPKQLVIGGGVAANQYIFGAISKLSAAHNVTTIKVLLSLCTDNAEMIAYSGLLMLVNRSEAIWWRPNDIPDTIYAHARSDIGTDASSEIIDTPRRKLVTSTIHGTERIRFRNLDDFKKPKSPKTTE</sequence>
<comment type="function">
    <text evidence="1 2">Required for the formation of a threonylcarbamoyl group on adenosine at position 37 (t(6)A37) in mitochondrial tRNAs that read codons beginning with adenine. Probably involved in the transfer of the threonylcarbamoyl moiety of threonylcarbamoyl-AMP (TC-AMP) to the N6 group of A37 (By similarity). Involved in mitochondrial genome maintenance.</text>
</comment>
<comment type="catalytic activity">
    <reaction evidence="1">
        <text>L-threonylcarbamoyladenylate + adenosine(37) in tRNA = N(6)-L-threonylcarbamoyladenosine(37) in tRNA + AMP + H(+)</text>
        <dbReference type="Rhea" id="RHEA:37059"/>
        <dbReference type="Rhea" id="RHEA-COMP:10162"/>
        <dbReference type="Rhea" id="RHEA-COMP:10163"/>
        <dbReference type="ChEBI" id="CHEBI:15378"/>
        <dbReference type="ChEBI" id="CHEBI:73682"/>
        <dbReference type="ChEBI" id="CHEBI:74411"/>
        <dbReference type="ChEBI" id="CHEBI:74418"/>
        <dbReference type="ChEBI" id="CHEBI:456215"/>
        <dbReference type="EC" id="2.3.1.234"/>
    </reaction>
</comment>
<comment type="cofactor">
    <cofactor evidence="1">
        <name>a divalent metal cation</name>
        <dbReference type="ChEBI" id="CHEBI:60240"/>
    </cofactor>
    <text evidence="1">Binds 1 divalent metal cation per subunit.</text>
</comment>
<comment type="subunit">
    <text evidence="1">Homodimer.</text>
</comment>
<comment type="subcellular location">
    <subcellularLocation>
        <location evidence="1 2">Mitochondrion</location>
    </subcellularLocation>
</comment>
<comment type="disruption phenotype">
    <text evidence="2">Enhances longevity, resistance to oxidative stress, and perturbs mitochondrial reticulum morphology.</text>
</comment>
<comment type="similarity">
    <text evidence="1">Belongs to the KAE1 / TsaD family.</text>
</comment>
<evidence type="ECO:0000255" key="1">
    <source>
        <dbReference type="HAMAP-Rule" id="MF_03179"/>
    </source>
</evidence>
<evidence type="ECO:0000269" key="2">
    <source>
    </source>
</evidence>
<keyword id="KW-0012">Acyltransferase</keyword>
<keyword id="KW-0479">Metal-binding</keyword>
<keyword id="KW-0496">Mitochondrion</keyword>
<keyword id="KW-1185">Reference proteome</keyword>
<keyword id="KW-0808">Transferase</keyword>
<keyword id="KW-0809">Transit peptide</keyword>
<keyword id="KW-0819">tRNA processing</keyword>
<feature type="transit peptide" description="Mitochondrion" evidence="1">
    <location>
        <begin position="1"/>
        <end position="22"/>
    </location>
</feature>
<feature type="chain" id="PRO_0000424535" description="Probable tRNA N6-adenosine threonylcarbamoyltransferase, mitochondrial">
    <location>
        <begin position="23"/>
        <end position="421"/>
    </location>
</feature>
<feature type="binding site" evidence="1">
    <location>
        <position position="133"/>
    </location>
    <ligand>
        <name>a divalent metal cation</name>
        <dbReference type="ChEBI" id="CHEBI:60240"/>
    </ligand>
</feature>
<feature type="binding site" evidence="1">
    <location>
        <position position="137"/>
    </location>
    <ligand>
        <name>a divalent metal cation</name>
        <dbReference type="ChEBI" id="CHEBI:60240"/>
    </ligand>
</feature>
<feature type="binding site" evidence="1">
    <location>
        <begin position="156"/>
        <end position="160"/>
    </location>
    <ligand>
        <name>substrate</name>
    </ligand>
</feature>
<feature type="binding site" evidence="1">
    <location>
        <position position="189"/>
    </location>
    <ligand>
        <name>substrate</name>
    </ligand>
</feature>
<feature type="binding site" evidence="1">
    <location>
        <position position="208"/>
    </location>
    <ligand>
        <name>substrate</name>
    </ligand>
</feature>
<feature type="binding site" evidence="1">
    <location>
        <position position="212"/>
    </location>
    <ligand>
        <name>substrate</name>
    </ligand>
</feature>
<feature type="binding site" evidence="1">
    <location>
        <begin position="308"/>
        <end position="309"/>
    </location>
    <ligand>
        <name>substrate</name>
    </ligand>
</feature>
<feature type="binding site" evidence="1">
    <location>
        <position position="336"/>
    </location>
    <ligand>
        <name>substrate</name>
    </ligand>
</feature>
<feature type="binding site" evidence="1">
    <location>
        <position position="337"/>
    </location>
    <ligand>
        <name>a divalent metal cation</name>
        <dbReference type="ChEBI" id="CHEBI:60240"/>
    </ligand>
</feature>
<protein>
    <recommendedName>
        <fullName evidence="1">Probable tRNA N6-adenosine threonylcarbamoyltransferase, mitochondrial</fullName>
        <ecNumber evidence="1">2.3.1.234</ecNumber>
    </recommendedName>
    <alternativeName>
        <fullName evidence="1">N6-L-threonylcarbamoyladenine synthase</fullName>
        <shortName evidence="1">t(6)A synthase</shortName>
    </alternativeName>
    <alternativeName>
        <fullName evidence="1">t(6)A37 threonylcarbamoyladenosine biosynthesis protein osgl-1</fullName>
    </alternativeName>
    <alternativeName>
        <fullName evidence="1">tRNA threonylcarbamoyladenosine biosynthesis protein osgl-1</fullName>
    </alternativeName>
</protein>
<organism>
    <name type="scientific">Caenorhabditis elegans</name>
    <dbReference type="NCBI Taxonomy" id="6239"/>
    <lineage>
        <taxon>Eukaryota</taxon>
        <taxon>Metazoa</taxon>
        <taxon>Ecdysozoa</taxon>
        <taxon>Nematoda</taxon>
        <taxon>Chromadorea</taxon>
        <taxon>Rhabditida</taxon>
        <taxon>Rhabditina</taxon>
        <taxon>Rhabditomorpha</taxon>
        <taxon>Rhabditoidea</taxon>
        <taxon>Rhabditidae</taxon>
        <taxon>Peloderinae</taxon>
        <taxon>Caenorhabditis</taxon>
    </lineage>
</organism>
<reference key="1">
    <citation type="journal article" date="1998" name="Science">
        <title>Genome sequence of the nematode C. elegans: a platform for investigating biology.</title>
        <authorList>
            <consortium name="The C. elegans sequencing consortium"/>
        </authorList>
    </citation>
    <scope>NUCLEOTIDE SEQUENCE [LARGE SCALE GENOMIC DNA]</scope>
    <source>
        <strain>Bristol N2</strain>
    </source>
</reference>
<reference key="2">
    <citation type="journal article" date="2009" name="Nucleic Acids Res.">
        <title>Qri7/OSGEPL, the mitochondrial version of the universal Kae1/YgjD protein, is essential for mitochondrial genome maintenance.</title>
        <authorList>
            <person name="Oberto J."/>
            <person name="Breuil N."/>
            <person name="Hecker A."/>
            <person name="Farina F."/>
            <person name="Brochier-Armanet C."/>
            <person name="Culetto E."/>
            <person name="Forterre P."/>
        </authorList>
    </citation>
    <scope>FUNCTION IN MITOCHONDRIAL GENOME MAINTENANCE</scope>
    <scope>SUBCELLULAR LOCATION</scope>
    <scope>DISRUPTION PHENOTYPE</scope>
</reference>
<gene>
    <name type="ORF">C01G10.10</name>
</gene>